<evidence type="ECO:0000255" key="1"/>
<evidence type="ECO:0000305" key="2"/>
<gene>
    <name type="primary">FCPC</name>
    <name type="synonym">FCP2</name>
</gene>
<comment type="function">
    <text>The light-harvesting complex (LHC) functions as a light receptor, it captures and delivers excitation energy to photosystems with which it is closely associated. Energy is transferred from the carotenoid and chlorophyll C (or B) to chlorophyll A and the photosynthetic reaction centers where it is used to synthesize ATP and reducing power.</text>
</comment>
<comment type="subunit">
    <text>The LHC complex of chromophytic algae is composed of fucoxanthin, chlorophyll A and C bound non-covalently by fucoxanthin chlorophyll proteins (FCPs). The ratio of the pigments in LHC; fucoxanthin: chlorophyll C: chlorophyll A; (0.6-1): (0.1-0.3): (1).</text>
</comment>
<comment type="subcellular location">
    <subcellularLocation>
        <location>Plastid</location>
        <location>Chloroplast thylakoid membrane</location>
        <topology>Multi-pass membrane protein</topology>
    </subcellularLocation>
    <text>FCPs are probably transported across the endoplasmic reticulum membranes that surround the plastid via a signal peptide, followed by translocation across the thylakoid membrane via a transit peptide.</text>
</comment>
<comment type="similarity">
    <text evidence="2">Belongs to the fucoxanthin chlorophyll protein family.</text>
</comment>
<keyword id="KW-0148">Chlorophyll</keyword>
<keyword id="KW-0150">Chloroplast</keyword>
<keyword id="KW-0157">Chromophore</keyword>
<keyword id="KW-0437">Light-harvesting polypeptide</keyword>
<keyword id="KW-0472">Membrane</keyword>
<keyword id="KW-0602">Photosynthesis</keyword>
<keyword id="KW-0604">Photosystem II</keyword>
<keyword id="KW-0934">Plastid</keyword>
<keyword id="KW-0793">Thylakoid</keyword>
<keyword id="KW-0809">Transit peptide</keyword>
<keyword id="KW-0812">Transmembrane</keyword>
<keyword id="KW-1133">Transmembrane helix</keyword>
<feature type="transit peptide" description="Chloroplast" evidence="2">
    <location>
        <begin position="1"/>
        <end position="31"/>
    </location>
</feature>
<feature type="chain" id="PRO_0000021238" description="Fucoxanthin-chlorophyll a-c binding protein C, chloroplastic">
    <location>
        <begin position="32"/>
        <end position="197"/>
    </location>
</feature>
<feature type="transmembrane region" description="Helical" evidence="1">
    <location>
        <begin position="73"/>
        <end position="94"/>
    </location>
</feature>
<feature type="transmembrane region" description="Helical" evidence="1">
    <location>
        <begin position="113"/>
        <end position="133"/>
    </location>
</feature>
<feature type="transmembrane region" description="Helical" evidence="1">
    <location>
        <begin position="174"/>
        <end position="196"/>
    </location>
</feature>
<feature type="sequence conflict" description="In Ref. 2; CAA38955." evidence="2" ref="2">
    <original>KF</original>
    <variation>NV</variation>
    <location>
        <begin position="106"/>
        <end position="107"/>
    </location>
</feature>
<feature type="sequence conflict" description="In Ref. 2; CAA38955." evidence="2" ref="2">
    <original>F</original>
    <variation>L</variation>
    <location>
        <position position="184"/>
    </location>
</feature>
<dbReference type="EMBL" id="Z24768">
    <property type="protein sequence ID" value="CAA80895.1"/>
    <property type="molecule type" value="Genomic_DNA"/>
</dbReference>
<dbReference type="EMBL" id="X55156">
    <property type="protein sequence ID" value="CAA38955.1"/>
    <property type="molecule type" value="mRNA"/>
</dbReference>
<dbReference type="PIR" id="S42132">
    <property type="entry name" value="S42132"/>
</dbReference>
<dbReference type="SMR" id="Q08586"/>
<dbReference type="HOGENOM" id="CLU_057943_4_1_1"/>
<dbReference type="GO" id="GO:0009535">
    <property type="term" value="C:chloroplast thylakoid membrane"/>
    <property type="evidence" value="ECO:0007669"/>
    <property type="project" value="UniProtKB-SubCell"/>
</dbReference>
<dbReference type="GO" id="GO:0030076">
    <property type="term" value="C:light-harvesting complex"/>
    <property type="evidence" value="ECO:0007669"/>
    <property type="project" value="UniProtKB-KW"/>
</dbReference>
<dbReference type="GO" id="GO:0009523">
    <property type="term" value="C:photosystem II"/>
    <property type="evidence" value="ECO:0007669"/>
    <property type="project" value="UniProtKB-KW"/>
</dbReference>
<dbReference type="GO" id="GO:0016168">
    <property type="term" value="F:chlorophyll binding"/>
    <property type="evidence" value="ECO:0007669"/>
    <property type="project" value="UniProtKB-KW"/>
</dbReference>
<dbReference type="GO" id="GO:0009765">
    <property type="term" value="P:photosynthesis, light harvesting"/>
    <property type="evidence" value="ECO:0007669"/>
    <property type="project" value="InterPro"/>
</dbReference>
<dbReference type="FunFam" id="1.10.3460.10:FF:000011">
    <property type="entry name" value="Fucoxanthin chlorophyll a/c protein 8"/>
    <property type="match status" value="1"/>
</dbReference>
<dbReference type="Gene3D" id="1.10.3460.10">
    <property type="entry name" value="Chlorophyll a/b binding protein domain"/>
    <property type="match status" value="1"/>
</dbReference>
<dbReference type="InterPro" id="IPR001344">
    <property type="entry name" value="Chloro_AB-bd_pln"/>
</dbReference>
<dbReference type="InterPro" id="IPR022796">
    <property type="entry name" value="Chloroa_b-bind"/>
</dbReference>
<dbReference type="PANTHER" id="PTHR21649">
    <property type="entry name" value="CHLOROPHYLL A/B BINDING PROTEIN"/>
    <property type="match status" value="1"/>
</dbReference>
<dbReference type="Pfam" id="PF00504">
    <property type="entry name" value="Chloroa_b-bind"/>
    <property type="match status" value="1"/>
</dbReference>
<dbReference type="SUPFAM" id="SSF103511">
    <property type="entry name" value="Chlorophyll a-b binding protein"/>
    <property type="match status" value="1"/>
</dbReference>
<name>FCPC_PHATR</name>
<organism>
    <name type="scientific">Phaeodactylum tricornutum</name>
    <name type="common">Diatom</name>
    <dbReference type="NCBI Taxonomy" id="2850"/>
    <lineage>
        <taxon>Eukaryota</taxon>
        <taxon>Sar</taxon>
        <taxon>Stramenopiles</taxon>
        <taxon>Ochrophyta</taxon>
        <taxon>Bacillariophyta</taxon>
        <taxon>Bacillariophyceae</taxon>
        <taxon>Bacillariophycidae</taxon>
        <taxon>Naviculales</taxon>
        <taxon>Phaeodactylaceae</taxon>
        <taxon>Phaeodactylum</taxon>
    </lineage>
</organism>
<sequence>MKTAVIASLIAGAAAFAPAKNAARTSVATNMAFEDELGAQPPLGFFDPLGLVADGDQEKFDRLRYVEIKHGRISMLAVVGYLVQEAGVRLPGTIDYSGKTFAEIPKFAAFKEIPAGGLVQLLFFIGVLESSVMRDLTGEAEFVGDFRNGAIDFGWDTFDEETQFKKRAIELNQGRAAQMGILAFMVHEQLGVSLLPQ</sequence>
<proteinExistence type="evidence at transcript level"/>
<protein>
    <recommendedName>
        <fullName>Fucoxanthin-chlorophyll a-c binding protein C, chloroplastic</fullName>
    </recommendedName>
</protein>
<reference key="1">
    <citation type="journal article" date="1993" name="Nucleic Acids Res.">
        <title>Characterization of gene clusters encoding the fucoxanthin chlorophyll proteins of the diatom Phaeodactylum tricornutum.</title>
        <authorList>
            <person name="Bhaya D."/>
            <person name="Grossman A.R."/>
        </authorList>
    </citation>
    <scope>NUCLEOTIDE SEQUENCE [GENOMIC DNA]</scope>
    <source>
        <strain>UTEX 646 / Bohlin</strain>
    </source>
</reference>
<reference key="2">
    <citation type="journal article" date="1990" name="Mol. Gen. Genet.">
        <title>Light-harvesting proteins of diatoms: their relationship to the chlorophyll a/b binding proteins of higher plants and their mode of transport into plastids.</title>
        <authorList>
            <person name="Grossman A."/>
            <person name="Manodori A."/>
            <person name="Snyder D."/>
        </authorList>
    </citation>
    <scope>NUCLEOTIDE SEQUENCE [MRNA]</scope>
    <source>
        <strain>UTEX 646 / Bohlin</strain>
    </source>
</reference>
<accession>Q08586</accession>
<accession>Q01273</accession>